<evidence type="ECO:0000255" key="1">
    <source>
        <dbReference type="HAMAP-Rule" id="MF_00823"/>
    </source>
</evidence>
<evidence type="ECO:0000255" key="2">
    <source>
        <dbReference type="PROSITE-ProRule" id="PRU01137"/>
    </source>
</evidence>
<gene>
    <name evidence="1" type="primary">accA</name>
    <name type="ordered locus">Asuc_1127</name>
</gene>
<sequence>MSQEYLDFELPIAELEAKIESLRAVSGDDNEINLDDEIKRLQKKSEELTKKTFANLDAWQISRMARHPNRPYTLDYIQHIFTEFEELAGDRAFADDKAIVGGLARLDGRPVMVIGHQKGRTTKEKVLRNFGMPAPEGYRKALRLMEMAERFKLPIITFIDTPGAYPGVGAEERGQAEAIARNLREMSTLSVPVICTVIGEGGSGGALAIGVGDKVNMLQYSTYSVISPEGCASILWKSAEKASTAAEVMGLTAERLKELDLIDNIVTEPLGGAHRNYAETAQNLKARLLTDLEDLDVLDKDDLLDRRYQRLMSYGYC</sequence>
<keyword id="KW-0067">ATP-binding</keyword>
<keyword id="KW-0963">Cytoplasm</keyword>
<keyword id="KW-0275">Fatty acid biosynthesis</keyword>
<keyword id="KW-0276">Fatty acid metabolism</keyword>
<keyword id="KW-0444">Lipid biosynthesis</keyword>
<keyword id="KW-0443">Lipid metabolism</keyword>
<keyword id="KW-0547">Nucleotide-binding</keyword>
<keyword id="KW-1185">Reference proteome</keyword>
<keyword id="KW-0808">Transferase</keyword>
<organism>
    <name type="scientific">Actinobacillus succinogenes (strain ATCC 55618 / DSM 22257 / CCUG 43843 / 130Z)</name>
    <dbReference type="NCBI Taxonomy" id="339671"/>
    <lineage>
        <taxon>Bacteria</taxon>
        <taxon>Pseudomonadati</taxon>
        <taxon>Pseudomonadota</taxon>
        <taxon>Gammaproteobacteria</taxon>
        <taxon>Pasteurellales</taxon>
        <taxon>Pasteurellaceae</taxon>
        <taxon>Actinobacillus</taxon>
    </lineage>
</organism>
<protein>
    <recommendedName>
        <fullName evidence="1">Acetyl-coenzyme A carboxylase carboxyl transferase subunit alpha</fullName>
        <shortName evidence="1">ACCase subunit alpha</shortName>
        <shortName evidence="1">Acetyl-CoA carboxylase carboxyltransferase subunit alpha</shortName>
        <ecNumber evidence="1">2.1.3.15</ecNumber>
    </recommendedName>
</protein>
<feature type="chain" id="PRO_1000072878" description="Acetyl-coenzyme A carboxylase carboxyl transferase subunit alpha">
    <location>
        <begin position="1"/>
        <end position="317"/>
    </location>
</feature>
<feature type="domain" description="CoA carboxyltransferase C-terminal" evidence="2">
    <location>
        <begin position="40"/>
        <end position="294"/>
    </location>
</feature>
<accession>A6VNE6</accession>
<comment type="function">
    <text evidence="1">Component of the acetyl coenzyme A carboxylase (ACC) complex. First, biotin carboxylase catalyzes the carboxylation of biotin on its carrier protein (BCCP) and then the CO(2) group is transferred by the carboxyltransferase to acetyl-CoA to form malonyl-CoA.</text>
</comment>
<comment type="catalytic activity">
    <reaction evidence="1">
        <text>N(6)-carboxybiotinyl-L-lysyl-[protein] + acetyl-CoA = N(6)-biotinyl-L-lysyl-[protein] + malonyl-CoA</text>
        <dbReference type="Rhea" id="RHEA:54728"/>
        <dbReference type="Rhea" id="RHEA-COMP:10505"/>
        <dbReference type="Rhea" id="RHEA-COMP:10506"/>
        <dbReference type="ChEBI" id="CHEBI:57288"/>
        <dbReference type="ChEBI" id="CHEBI:57384"/>
        <dbReference type="ChEBI" id="CHEBI:83144"/>
        <dbReference type="ChEBI" id="CHEBI:83145"/>
        <dbReference type="EC" id="2.1.3.15"/>
    </reaction>
</comment>
<comment type="pathway">
    <text evidence="1">Lipid metabolism; malonyl-CoA biosynthesis; malonyl-CoA from acetyl-CoA: step 1/1.</text>
</comment>
<comment type="subunit">
    <text evidence="1">Acetyl-CoA carboxylase is a heterohexamer composed of biotin carboxyl carrier protein (AccB), biotin carboxylase (AccC) and two subunits each of ACCase subunit alpha (AccA) and ACCase subunit beta (AccD).</text>
</comment>
<comment type="subcellular location">
    <subcellularLocation>
        <location evidence="1">Cytoplasm</location>
    </subcellularLocation>
</comment>
<comment type="similarity">
    <text evidence="1">Belongs to the AccA family.</text>
</comment>
<name>ACCA_ACTSZ</name>
<reference key="1">
    <citation type="journal article" date="2010" name="BMC Genomics">
        <title>A genomic perspective on the potential of Actinobacillus succinogenes for industrial succinate production.</title>
        <authorList>
            <person name="McKinlay J.B."/>
            <person name="Laivenieks M."/>
            <person name="Schindler B.D."/>
            <person name="McKinlay A.A."/>
            <person name="Siddaramappa S."/>
            <person name="Challacombe J.F."/>
            <person name="Lowry S.R."/>
            <person name="Clum A."/>
            <person name="Lapidus A.L."/>
            <person name="Burkhart K.B."/>
            <person name="Harkins V."/>
            <person name="Vieille C."/>
        </authorList>
    </citation>
    <scope>NUCLEOTIDE SEQUENCE [LARGE SCALE GENOMIC DNA]</scope>
    <source>
        <strain>ATCC 55618 / DSM 22257 / CCUG 43843 / 130Z</strain>
    </source>
</reference>
<dbReference type="EC" id="2.1.3.15" evidence="1"/>
<dbReference type="EMBL" id="CP000746">
    <property type="protein sequence ID" value="ABR74493.1"/>
    <property type="molecule type" value="Genomic_DNA"/>
</dbReference>
<dbReference type="RefSeq" id="WP_012072870.1">
    <property type="nucleotide sequence ID" value="NC_009655.1"/>
</dbReference>
<dbReference type="SMR" id="A6VNE6"/>
<dbReference type="STRING" id="339671.Asuc_1127"/>
<dbReference type="KEGG" id="asu:Asuc_1127"/>
<dbReference type="eggNOG" id="COG0825">
    <property type="taxonomic scope" value="Bacteria"/>
</dbReference>
<dbReference type="HOGENOM" id="CLU_015486_0_2_6"/>
<dbReference type="OrthoDB" id="9808023at2"/>
<dbReference type="UniPathway" id="UPA00655">
    <property type="reaction ID" value="UER00711"/>
</dbReference>
<dbReference type="Proteomes" id="UP000001114">
    <property type="component" value="Chromosome"/>
</dbReference>
<dbReference type="GO" id="GO:0009317">
    <property type="term" value="C:acetyl-CoA carboxylase complex"/>
    <property type="evidence" value="ECO:0007669"/>
    <property type="project" value="InterPro"/>
</dbReference>
<dbReference type="GO" id="GO:0003989">
    <property type="term" value="F:acetyl-CoA carboxylase activity"/>
    <property type="evidence" value="ECO:0007669"/>
    <property type="project" value="InterPro"/>
</dbReference>
<dbReference type="GO" id="GO:0005524">
    <property type="term" value="F:ATP binding"/>
    <property type="evidence" value="ECO:0007669"/>
    <property type="project" value="UniProtKB-KW"/>
</dbReference>
<dbReference type="GO" id="GO:0016743">
    <property type="term" value="F:carboxyl- or carbamoyltransferase activity"/>
    <property type="evidence" value="ECO:0007669"/>
    <property type="project" value="UniProtKB-UniRule"/>
</dbReference>
<dbReference type="GO" id="GO:0006633">
    <property type="term" value="P:fatty acid biosynthetic process"/>
    <property type="evidence" value="ECO:0007669"/>
    <property type="project" value="UniProtKB-KW"/>
</dbReference>
<dbReference type="GO" id="GO:2001295">
    <property type="term" value="P:malonyl-CoA biosynthetic process"/>
    <property type="evidence" value="ECO:0007669"/>
    <property type="project" value="UniProtKB-UniRule"/>
</dbReference>
<dbReference type="FunFam" id="3.90.226.10:FF:000008">
    <property type="entry name" value="Acetyl-coenzyme A carboxylase carboxyl transferase subunit alpha"/>
    <property type="match status" value="1"/>
</dbReference>
<dbReference type="Gene3D" id="3.90.226.10">
    <property type="entry name" value="2-enoyl-CoA Hydratase, Chain A, domain 1"/>
    <property type="match status" value="1"/>
</dbReference>
<dbReference type="HAMAP" id="MF_00823">
    <property type="entry name" value="AcetylCoA_CT_alpha"/>
    <property type="match status" value="1"/>
</dbReference>
<dbReference type="InterPro" id="IPR001095">
    <property type="entry name" value="Acetyl_CoA_COase_a_su"/>
</dbReference>
<dbReference type="InterPro" id="IPR029045">
    <property type="entry name" value="ClpP/crotonase-like_dom_sf"/>
</dbReference>
<dbReference type="InterPro" id="IPR011763">
    <property type="entry name" value="COA_CT_C"/>
</dbReference>
<dbReference type="NCBIfam" id="TIGR00513">
    <property type="entry name" value="accA"/>
    <property type="match status" value="1"/>
</dbReference>
<dbReference type="NCBIfam" id="NF041504">
    <property type="entry name" value="AccA_sub"/>
    <property type="match status" value="1"/>
</dbReference>
<dbReference type="NCBIfam" id="NF004344">
    <property type="entry name" value="PRK05724.1"/>
    <property type="match status" value="1"/>
</dbReference>
<dbReference type="PANTHER" id="PTHR42853">
    <property type="entry name" value="ACETYL-COENZYME A CARBOXYLASE CARBOXYL TRANSFERASE SUBUNIT ALPHA"/>
    <property type="match status" value="1"/>
</dbReference>
<dbReference type="PANTHER" id="PTHR42853:SF3">
    <property type="entry name" value="ACETYL-COENZYME A CARBOXYLASE CARBOXYL TRANSFERASE SUBUNIT ALPHA, CHLOROPLASTIC"/>
    <property type="match status" value="1"/>
</dbReference>
<dbReference type="Pfam" id="PF03255">
    <property type="entry name" value="ACCA"/>
    <property type="match status" value="1"/>
</dbReference>
<dbReference type="PRINTS" id="PR01069">
    <property type="entry name" value="ACCCTRFRASEA"/>
</dbReference>
<dbReference type="SUPFAM" id="SSF52096">
    <property type="entry name" value="ClpP/crotonase"/>
    <property type="match status" value="1"/>
</dbReference>
<dbReference type="PROSITE" id="PS50989">
    <property type="entry name" value="COA_CT_CTER"/>
    <property type="match status" value="1"/>
</dbReference>
<proteinExistence type="inferred from homology"/>